<reference key="1">
    <citation type="journal article" date="1986" name="J. Gen. Virol.">
        <title>The complete DNA sequence of varicella-zoster virus.</title>
        <authorList>
            <person name="Davison A.J."/>
            <person name="Scott J.E."/>
        </authorList>
    </citation>
    <scope>NUCLEOTIDE SEQUENCE [LARGE SCALE GENOMIC DNA]</scope>
</reference>
<name>TRX2_VZVD</name>
<proteinExistence type="evidence at protein level"/>
<sequence length="316" mass="34389">MAMPFEIEVLLPGELSPAETSALQKCEGKIITFSTLRHRASLVDIALSSYYINGAPPDTLSLLEAYRMRFAAVITRVIPGKLLAHAIGVGTPTPGLFIQNTSPVDLCNGDYICLLPPVFGSADSIRLDSVGLEIVFPLTIPQTLMREIIAKVVARAVERTAAGAQILPHEVLRGADVICYNGRRYELETNLQHRDGSDAAIRTLVLNLMFSINEGCLLLLALIPTLLVQGAHDGYVNLLIQTANCVRETGQLINIPPMPRIQDGHRRFPIYETISSWISTSSRLGDTLGTRAILRVCVFDGPSTVHPGDRTAVIQV</sequence>
<gene>
    <name evidence="1" type="primary">TRX2</name>
    <name type="ordered locus">41</name>
</gene>
<organismHost>
    <name type="scientific">Homo sapiens</name>
    <name type="common">Human</name>
    <dbReference type="NCBI Taxonomy" id="9606"/>
</organismHost>
<comment type="function">
    <text evidence="1">Structural component of the T=16 icosahedral capsid. The capsid is composed of pentamers and hexamers of major capsid protein/MCP, which are linked together by heterotrimers called triplexes. These triplexes are formed by a single molecule of triplex protein 1/TRX1 and two copies of triplex protein 2/TRX2. Additionally, TRX1 is required for efficient transport of TRX2 to the nucleus, which is the site of capsid assembly.</text>
</comment>
<comment type="subunit">
    <text evidence="1">Interacts with TRX1 and major capisd protein/MCP.</text>
</comment>
<comment type="subcellular location">
    <subcellularLocation>
        <location evidence="1">Virion</location>
    </subcellularLocation>
    <subcellularLocation>
        <location evidence="1">Host nucleus</location>
    </subcellularLocation>
</comment>
<comment type="similarity">
    <text evidence="1">Belongs to the herpesviridae TRX2 protein family.</text>
</comment>
<protein>
    <recommendedName>
        <fullName evidence="1">Triplex capsid protein 2</fullName>
    </recommendedName>
</protein>
<keyword id="KW-0002">3D-structure</keyword>
<keyword id="KW-0167">Capsid protein</keyword>
<keyword id="KW-1048">Host nucleus</keyword>
<keyword id="KW-1185">Reference proteome</keyword>
<keyword id="KW-0946">Virion</keyword>
<organism>
    <name type="scientific">Varicella-zoster virus (strain Dumas)</name>
    <name type="common">HHV-3</name>
    <name type="synonym">Human herpesvirus 3</name>
    <dbReference type="NCBI Taxonomy" id="10338"/>
    <lineage>
        <taxon>Viruses</taxon>
        <taxon>Duplodnaviria</taxon>
        <taxon>Heunggongvirae</taxon>
        <taxon>Peploviricota</taxon>
        <taxon>Herviviricetes</taxon>
        <taxon>Herpesvirales</taxon>
        <taxon>Orthoherpesviridae</taxon>
        <taxon>Alphaherpesvirinae</taxon>
        <taxon>Varicellovirus</taxon>
        <taxon>Varicellovirus humanalpha3</taxon>
        <taxon>Human herpesvirus 3</taxon>
    </lineage>
</organism>
<evidence type="ECO:0000255" key="1">
    <source>
        <dbReference type="HAMAP-Rule" id="MF_04019"/>
    </source>
</evidence>
<dbReference type="EMBL" id="X04370">
    <property type="protein sequence ID" value="CAA27924.1"/>
    <property type="molecule type" value="Genomic_DNA"/>
</dbReference>
<dbReference type="PIR" id="F27341">
    <property type="entry name" value="WZBE41"/>
</dbReference>
<dbReference type="PDB" id="8XA0">
    <property type="method" value="EM"/>
    <property type="resolution" value="4.00 A"/>
    <property type="chains" value="R=2-316, V=2-316"/>
</dbReference>
<dbReference type="PDB" id="8XA2">
    <property type="method" value="EM"/>
    <property type="resolution" value="4.00 A"/>
    <property type="chains" value="R=2-316, V=2-316"/>
</dbReference>
<dbReference type="PDBsum" id="8XA0"/>
<dbReference type="PDBsum" id="8XA2"/>
<dbReference type="SMR" id="P09291"/>
<dbReference type="Proteomes" id="UP000002602">
    <property type="component" value="Genome"/>
</dbReference>
<dbReference type="GO" id="GO:0042025">
    <property type="term" value="C:host cell nucleus"/>
    <property type="evidence" value="ECO:0007669"/>
    <property type="project" value="UniProtKB-SubCell"/>
</dbReference>
<dbReference type="GO" id="GO:0019028">
    <property type="term" value="C:viral capsid"/>
    <property type="evidence" value="ECO:0007669"/>
    <property type="project" value="UniProtKB-KW"/>
</dbReference>
<dbReference type="GO" id="GO:0005198">
    <property type="term" value="F:structural molecule activity"/>
    <property type="evidence" value="ECO:0007669"/>
    <property type="project" value="InterPro"/>
</dbReference>
<dbReference type="HAMAP" id="MF_04019">
    <property type="entry name" value="HSV_TRX2"/>
    <property type="match status" value="1"/>
</dbReference>
<dbReference type="InterPro" id="IPR002690">
    <property type="entry name" value="Herpes_capsid_2"/>
</dbReference>
<dbReference type="Pfam" id="PF01802">
    <property type="entry name" value="Herpes_V23"/>
    <property type="match status" value="1"/>
</dbReference>
<accession>P09291</accession>
<feature type="chain" id="PRO_0000115730" description="Triplex capsid protein 2">
    <location>
        <begin position="1"/>
        <end position="316"/>
    </location>
</feature>